<name>3SO3_BUNFA</name>
<dbReference type="EMBL" id="DQ508409">
    <property type="status" value="NOT_ANNOTATED_CDS"/>
    <property type="molecule type" value="mRNA"/>
</dbReference>
<dbReference type="SMR" id="P0C554"/>
<dbReference type="GO" id="GO:0005576">
    <property type="term" value="C:extracellular region"/>
    <property type="evidence" value="ECO:0007669"/>
    <property type="project" value="UniProtKB-SubCell"/>
</dbReference>
<dbReference type="GO" id="GO:0090729">
    <property type="term" value="F:toxin activity"/>
    <property type="evidence" value="ECO:0007669"/>
    <property type="project" value="UniProtKB-KW"/>
</dbReference>
<dbReference type="CDD" id="cd00206">
    <property type="entry name" value="TFP_snake_toxin"/>
    <property type="match status" value="1"/>
</dbReference>
<dbReference type="FunFam" id="2.10.60.10:FF:000024">
    <property type="entry name" value="Cytotoxin 1"/>
    <property type="match status" value="1"/>
</dbReference>
<dbReference type="Gene3D" id="2.10.60.10">
    <property type="entry name" value="CD59"/>
    <property type="match status" value="1"/>
</dbReference>
<dbReference type="InterPro" id="IPR003571">
    <property type="entry name" value="Snake_3FTx"/>
</dbReference>
<dbReference type="InterPro" id="IPR045860">
    <property type="entry name" value="Snake_toxin-like_sf"/>
</dbReference>
<dbReference type="InterPro" id="IPR018354">
    <property type="entry name" value="Snake_toxin_con_site"/>
</dbReference>
<dbReference type="InterPro" id="IPR054131">
    <property type="entry name" value="Toxin_cobra-type"/>
</dbReference>
<dbReference type="Pfam" id="PF21947">
    <property type="entry name" value="Toxin_cobra-type"/>
    <property type="match status" value="1"/>
</dbReference>
<dbReference type="SUPFAM" id="SSF57302">
    <property type="entry name" value="Snake toxin-like"/>
    <property type="match status" value="1"/>
</dbReference>
<dbReference type="PROSITE" id="PS00272">
    <property type="entry name" value="SNAKE_TOXIN"/>
    <property type="match status" value="1"/>
</dbReference>
<evidence type="ECO:0000250" key="1">
    <source>
        <dbReference type="UniProtKB" id="P83346"/>
    </source>
</evidence>
<evidence type="ECO:0000269" key="2">
    <source>
    </source>
</evidence>
<evidence type="ECO:0000305" key="3"/>
<evidence type="ECO:0000305" key="4">
    <source>
    </source>
</evidence>
<sequence>MKTLLLTLVVVTIVCLELGYTRKCLTKYSQDNESSKTCPSGQKLCFKKWETGKLLGTKVKRGCVATCPQPKKEWIIQCCAKDKCNK</sequence>
<accession>P0C554</accession>
<proteinExistence type="evidence at protein level"/>
<reference key="1">
    <citation type="journal article" date="2007" name="FEBS J.">
        <title>Sequences, geographic variations and molecular phylogeny of venom phospholipases and three-finger toxins of eastern India Bungarus fasciatus and kinetic analyses of its Pro31 phospholipases A2.</title>
        <authorList>
            <person name="Tsai I.-H."/>
            <person name="Tsai H.-Y."/>
            <person name="Saha A."/>
            <person name="Gomes A."/>
        </authorList>
    </citation>
    <scope>NUCLEOTIDE SEQUENCE [MRNA]</scope>
    <scope>PROTEIN SEQUENCE OF 22-37</scope>
    <scope>MASS SPECTROMETRY</scope>
    <scope>SUBCELLULAR LOCATION</scope>
    <source>
        <tissue>Venom</tissue>
        <tissue>Venom gland</tissue>
    </source>
</reference>
<feature type="signal peptide" evidence="2">
    <location>
        <begin position="1"/>
        <end position="21"/>
    </location>
</feature>
<feature type="chain" id="PRO_0000293106" description="Neurotoxin 3FTx-RK" evidence="4">
    <location>
        <begin position="22"/>
        <end position="86"/>
    </location>
</feature>
<feature type="disulfide bond" evidence="1">
    <location>
        <begin position="24"/>
        <end position="45"/>
    </location>
</feature>
<feature type="disulfide bond" evidence="1">
    <location>
        <begin position="38"/>
        <end position="63"/>
    </location>
</feature>
<feature type="disulfide bond" evidence="1">
    <location>
        <begin position="67"/>
        <end position="78"/>
    </location>
</feature>
<feature type="disulfide bond" evidence="1">
    <location>
        <begin position="79"/>
        <end position="84"/>
    </location>
</feature>
<organism>
    <name type="scientific">Bungarus fasciatus</name>
    <name type="common">Banded krait</name>
    <name type="synonym">Pseudoboa fasciata</name>
    <dbReference type="NCBI Taxonomy" id="8613"/>
    <lineage>
        <taxon>Eukaryota</taxon>
        <taxon>Metazoa</taxon>
        <taxon>Chordata</taxon>
        <taxon>Craniata</taxon>
        <taxon>Vertebrata</taxon>
        <taxon>Euteleostomi</taxon>
        <taxon>Lepidosauria</taxon>
        <taxon>Squamata</taxon>
        <taxon>Bifurcata</taxon>
        <taxon>Unidentata</taxon>
        <taxon>Episquamata</taxon>
        <taxon>Toxicofera</taxon>
        <taxon>Serpentes</taxon>
        <taxon>Colubroidea</taxon>
        <taxon>Elapidae</taxon>
        <taxon>Bungarinae</taxon>
        <taxon>Bungarus</taxon>
    </lineage>
</organism>
<keyword id="KW-0903">Direct protein sequencing</keyword>
<keyword id="KW-1015">Disulfide bond</keyword>
<keyword id="KW-0964">Secreted</keyword>
<keyword id="KW-0732">Signal</keyword>
<keyword id="KW-0800">Toxin</keyword>
<comment type="subcellular location">
    <subcellularLocation>
        <location evidence="2">Secreted</location>
    </subcellularLocation>
</comment>
<comment type="tissue specificity">
    <text evidence="3">Expressed by the venom gland.</text>
</comment>
<comment type="mass spectrometry"/>
<comment type="similarity">
    <text evidence="3">Belongs to the three-finger toxin family. Short-chain subfamily. Orphan group III sub-subfamily.</text>
</comment>
<protein>
    <recommendedName>
        <fullName>Neurotoxin 3FTx-RK</fullName>
    </recommendedName>
</protein>